<organism>
    <name type="scientific">Mus musculus</name>
    <name type="common">Mouse</name>
    <dbReference type="NCBI Taxonomy" id="10090"/>
    <lineage>
        <taxon>Eukaryota</taxon>
        <taxon>Metazoa</taxon>
        <taxon>Chordata</taxon>
        <taxon>Craniata</taxon>
        <taxon>Vertebrata</taxon>
        <taxon>Euteleostomi</taxon>
        <taxon>Mammalia</taxon>
        <taxon>Eutheria</taxon>
        <taxon>Euarchontoglires</taxon>
        <taxon>Glires</taxon>
        <taxon>Rodentia</taxon>
        <taxon>Myomorpha</taxon>
        <taxon>Muroidea</taxon>
        <taxon>Muridae</taxon>
        <taxon>Murinae</taxon>
        <taxon>Mus</taxon>
        <taxon>Mus</taxon>
    </lineage>
</organism>
<protein>
    <recommendedName>
        <fullName>Protein DENND6B</fullName>
    </recommendedName>
    <alternativeName>
        <fullName>DENN domain-containing protein 6B</fullName>
    </alternativeName>
</protein>
<comment type="function">
    <text evidence="1">Guanine nucleotide exchange factor (GEF) for RAB14. Also has some, lesser GEF activity towards RAB35 (By similarity).</text>
</comment>
<comment type="subcellular location">
    <subcellularLocation>
        <location evidence="4">Recycling endosome</location>
    </subcellularLocation>
    <subcellularLocation>
        <location evidence="4">Cytoplasm</location>
    </subcellularLocation>
</comment>
<comment type="similarity">
    <text evidence="4">Belongs to the DENND6 family.</text>
</comment>
<comment type="caution">
    <text evidence="4">Identified as having similarity to the core DENN family and referred to as DENN6B. Prediction methods do not indicate a DENN domain for this sequence and, the exact role of the DENN or this DENN-like domain in GEF activity needs to be clarified.</text>
</comment>
<comment type="sequence caution" evidence="4">
    <conflict type="erroneous initiation">
        <sequence resource="EMBL-CDS" id="BAB24583"/>
    </conflict>
    <text>Truncated N-terminus.</text>
</comment>
<keyword id="KW-0963">Cytoplasm</keyword>
<keyword id="KW-0967">Endosome</keyword>
<keyword id="KW-0344">Guanine-nucleotide releasing factor</keyword>
<keyword id="KW-1185">Reference proteome</keyword>
<proteinExistence type="evidence at transcript level"/>
<dbReference type="EMBL" id="AK006427">
    <property type="protein sequence ID" value="BAB24583.1"/>
    <property type="status" value="ALT_INIT"/>
    <property type="molecule type" value="mRNA"/>
</dbReference>
<dbReference type="EMBL" id="AK154949">
    <property type="status" value="NOT_ANNOTATED_CDS"/>
    <property type="molecule type" value="mRNA"/>
</dbReference>
<dbReference type="EMBL" id="CH466550">
    <property type="protein sequence ID" value="EDL04366.1"/>
    <property type="molecule type" value="Genomic_DNA"/>
</dbReference>
<dbReference type="EMBL" id="BC139003">
    <property type="protein sequence ID" value="AAI39004.1"/>
    <property type="molecule type" value="mRNA"/>
</dbReference>
<dbReference type="CCDS" id="CCDS57000.1"/>
<dbReference type="RefSeq" id="NP_081357.2">
    <property type="nucleotide sequence ID" value="NM_027081.3"/>
</dbReference>
<dbReference type="FunCoup" id="Q9D9V7">
    <property type="interactions" value="1866"/>
</dbReference>
<dbReference type="STRING" id="10090.ENSMUSP00000077978"/>
<dbReference type="iPTMnet" id="Q9D9V7"/>
<dbReference type="PhosphoSitePlus" id="Q9D9V7"/>
<dbReference type="PaxDb" id="10090-ENSMUSP00000077978"/>
<dbReference type="PeptideAtlas" id="Q9D9V7"/>
<dbReference type="ProteomicsDB" id="279623"/>
<dbReference type="Antibodypedia" id="6832">
    <property type="antibodies" value="44 antibodies from 16 providers"/>
</dbReference>
<dbReference type="DNASU" id="69440"/>
<dbReference type="Ensembl" id="ENSMUST00000078953.9">
    <property type="protein sequence ID" value="ENSMUSP00000077978.8"/>
    <property type="gene ID" value="ENSMUSG00000015377.11"/>
</dbReference>
<dbReference type="GeneID" id="69440"/>
<dbReference type="KEGG" id="mmu:69440"/>
<dbReference type="UCSC" id="uc029suk.1">
    <property type="organism name" value="mouse"/>
</dbReference>
<dbReference type="AGR" id="MGI:1916690"/>
<dbReference type="CTD" id="414918"/>
<dbReference type="MGI" id="MGI:1916690">
    <property type="gene designation" value="Dennd6b"/>
</dbReference>
<dbReference type="VEuPathDB" id="HostDB:ENSMUSG00000015377"/>
<dbReference type="eggNOG" id="KOG2432">
    <property type="taxonomic scope" value="Eukaryota"/>
</dbReference>
<dbReference type="GeneTree" id="ENSGT00390000005529"/>
<dbReference type="HOGENOM" id="CLU_017013_0_1_1"/>
<dbReference type="InParanoid" id="Q9D9V7"/>
<dbReference type="OMA" id="CIPSRVD"/>
<dbReference type="OrthoDB" id="10265409at2759"/>
<dbReference type="PhylomeDB" id="Q9D9V7"/>
<dbReference type="TreeFam" id="TF320228"/>
<dbReference type="Reactome" id="R-MMU-8876198">
    <property type="pathway name" value="RAB GEFs exchange GTP for GDP on RABs"/>
</dbReference>
<dbReference type="BioGRID-ORCS" id="69440">
    <property type="hits" value="1 hit in 76 CRISPR screens"/>
</dbReference>
<dbReference type="ChiTaRS" id="Dennd6b">
    <property type="organism name" value="mouse"/>
</dbReference>
<dbReference type="PRO" id="PR:Q9D9V7"/>
<dbReference type="Proteomes" id="UP000000589">
    <property type="component" value="Chromosome 15"/>
</dbReference>
<dbReference type="RNAct" id="Q9D9V7">
    <property type="molecule type" value="protein"/>
</dbReference>
<dbReference type="Bgee" id="ENSMUSG00000015377">
    <property type="expression patterns" value="Expressed in retinal neural layer and 143 other cell types or tissues"/>
</dbReference>
<dbReference type="ExpressionAtlas" id="Q9D9V7">
    <property type="expression patterns" value="baseline and differential"/>
</dbReference>
<dbReference type="GO" id="GO:0055037">
    <property type="term" value="C:recycling endosome"/>
    <property type="evidence" value="ECO:0007669"/>
    <property type="project" value="UniProtKB-SubCell"/>
</dbReference>
<dbReference type="GO" id="GO:0005085">
    <property type="term" value="F:guanyl-nucleotide exchange factor activity"/>
    <property type="evidence" value="ECO:0000250"/>
    <property type="project" value="UniProtKB"/>
</dbReference>
<dbReference type="InterPro" id="IPR001194">
    <property type="entry name" value="cDENN_dom"/>
</dbReference>
<dbReference type="InterPro" id="IPR024224">
    <property type="entry name" value="DENND6"/>
</dbReference>
<dbReference type="InterPro" id="IPR037516">
    <property type="entry name" value="Tripartite_DENN"/>
</dbReference>
<dbReference type="PANTHER" id="PTHR13677">
    <property type="entry name" value="LD41638P"/>
    <property type="match status" value="1"/>
</dbReference>
<dbReference type="PANTHER" id="PTHR13677:SF2">
    <property type="entry name" value="PROTEIN DENND6B"/>
    <property type="match status" value="1"/>
</dbReference>
<dbReference type="Pfam" id="PF02141">
    <property type="entry name" value="DENN"/>
    <property type="match status" value="1"/>
</dbReference>
<dbReference type="PROSITE" id="PS50211">
    <property type="entry name" value="DENN"/>
    <property type="match status" value="1"/>
</dbReference>
<accession>Q9D9V7</accession>
<accession>B2RSU3</accession>
<evidence type="ECO:0000250" key="1"/>
<evidence type="ECO:0000255" key="2">
    <source>
        <dbReference type="PROSITE-ProRule" id="PRU00304"/>
    </source>
</evidence>
<evidence type="ECO:0000256" key="3">
    <source>
        <dbReference type="SAM" id="MobiDB-lite"/>
    </source>
</evidence>
<evidence type="ECO:0000305" key="4"/>
<feature type="chain" id="PRO_0000264991" description="Protein DENND6B">
    <location>
        <begin position="1"/>
        <end position="585"/>
    </location>
</feature>
<feature type="domain" description="uDENN" evidence="2">
    <location>
        <begin position="43"/>
        <end position="221"/>
    </location>
</feature>
<feature type="domain" description="cDENN" evidence="2">
    <location>
        <begin position="246"/>
        <end position="373"/>
    </location>
</feature>
<feature type="domain" description="dDENN" evidence="2">
    <location>
        <begin position="375"/>
        <end position="499"/>
    </location>
</feature>
<feature type="region of interest" description="Disordered" evidence="3">
    <location>
        <begin position="1"/>
        <end position="25"/>
    </location>
</feature>
<feature type="compositionally biased region" description="Low complexity" evidence="3">
    <location>
        <begin position="1"/>
        <end position="10"/>
    </location>
</feature>
<reference key="1">
    <citation type="journal article" date="2005" name="Science">
        <title>The transcriptional landscape of the mammalian genome.</title>
        <authorList>
            <person name="Carninci P."/>
            <person name="Kasukawa T."/>
            <person name="Katayama S."/>
            <person name="Gough J."/>
            <person name="Frith M.C."/>
            <person name="Maeda N."/>
            <person name="Oyama R."/>
            <person name="Ravasi T."/>
            <person name="Lenhard B."/>
            <person name="Wells C."/>
            <person name="Kodzius R."/>
            <person name="Shimokawa K."/>
            <person name="Bajic V.B."/>
            <person name="Brenner S.E."/>
            <person name="Batalov S."/>
            <person name="Forrest A.R."/>
            <person name="Zavolan M."/>
            <person name="Davis M.J."/>
            <person name="Wilming L.G."/>
            <person name="Aidinis V."/>
            <person name="Allen J.E."/>
            <person name="Ambesi-Impiombato A."/>
            <person name="Apweiler R."/>
            <person name="Aturaliya R.N."/>
            <person name="Bailey T.L."/>
            <person name="Bansal M."/>
            <person name="Baxter L."/>
            <person name="Beisel K.W."/>
            <person name="Bersano T."/>
            <person name="Bono H."/>
            <person name="Chalk A.M."/>
            <person name="Chiu K.P."/>
            <person name="Choudhary V."/>
            <person name="Christoffels A."/>
            <person name="Clutterbuck D.R."/>
            <person name="Crowe M.L."/>
            <person name="Dalla E."/>
            <person name="Dalrymple B.P."/>
            <person name="de Bono B."/>
            <person name="Della Gatta G."/>
            <person name="di Bernardo D."/>
            <person name="Down T."/>
            <person name="Engstrom P."/>
            <person name="Fagiolini M."/>
            <person name="Faulkner G."/>
            <person name="Fletcher C.F."/>
            <person name="Fukushima T."/>
            <person name="Furuno M."/>
            <person name="Futaki S."/>
            <person name="Gariboldi M."/>
            <person name="Georgii-Hemming P."/>
            <person name="Gingeras T.R."/>
            <person name="Gojobori T."/>
            <person name="Green R.E."/>
            <person name="Gustincich S."/>
            <person name="Harbers M."/>
            <person name="Hayashi Y."/>
            <person name="Hensch T.K."/>
            <person name="Hirokawa N."/>
            <person name="Hill D."/>
            <person name="Huminiecki L."/>
            <person name="Iacono M."/>
            <person name="Ikeo K."/>
            <person name="Iwama A."/>
            <person name="Ishikawa T."/>
            <person name="Jakt M."/>
            <person name="Kanapin A."/>
            <person name="Katoh M."/>
            <person name="Kawasawa Y."/>
            <person name="Kelso J."/>
            <person name="Kitamura H."/>
            <person name="Kitano H."/>
            <person name="Kollias G."/>
            <person name="Krishnan S.P."/>
            <person name="Kruger A."/>
            <person name="Kummerfeld S.K."/>
            <person name="Kurochkin I.V."/>
            <person name="Lareau L.F."/>
            <person name="Lazarevic D."/>
            <person name="Lipovich L."/>
            <person name="Liu J."/>
            <person name="Liuni S."/>
            <person name="McWilliam S."/>
            <person name="Madan Babu M."/>
            <person name="Madera M."/>
            <person name="Marchionni L."/>
            <person name="Matsuda H."/>
            <person name="Matsuzawa S."/>
            <person name="Miki H."/>
            <person name="Mignone F."/>
            <person name="Miyake S."/>
            <person name="Morris K."/>
            <person name="Mottagui-Tabar S."/>
            <person name="Mulder N."/>
            <person name="Nakano N."/>
            <person name="Nakauchi H."/>
            <person name="Ng P."/>
            <person name="Nilsson R."/>
            <person name="Nishiguchi S."/>
            <person name="Nishikawa S."/>
            <person name="Nori F."/>
            <person name="Ohara O."/>
            <person name="Okazaki Y."/>
            <person name="Orlando V."/>
            <person name="Pang K.C."/>
            <person name="Pavan W.J."/>
            <person name="Pavesi G."/>
            <person name="Pesole G."/>
            <person name="Petrovsky N."/>
            <person name="Piazza S."/>
            <person name="Reed J."/>
            <person name="Reid J.F."/>
            <person name="Ring B.Z."/>
            <person name="Ringwald M."/>
            <person name="Rost B."/>
            <person name="Ruan Y."/>
            <person name="Salzberg S.L."/>
            <person name="Sandelin A."/>
            <person name="Schneider C."/>
            <person name="Schoenbach C."/>
            <person name="Sekiguchi K."/>
            <person name="Semple C.A."/>
            <person name="Seno S."/>
            <person name="Sessa L."/>
            <person name="Sheng Y."/>
            <person name="Shibata Y."/>
            <person name="Shimada H."/>
            <person name="Shimada K."/>
            <person name="Silva D."/>
            <person name="Sinclair B."/>
            <person name="Sperling S."/>
            <person name="Stupka E."/>
            <person name="Sugiura K."/>
            <person name="Sultana R."/>
            <person name="Takenaka Y."/>
            <person name="Taki K."/>
            <person name="Tammoja K."/>
            <person name="Tan S.L."/>
            <person name="Tang S."/>
            <person name="Taylor M.S."/>
            <person name="Tegner J."/>
            <person name="Teichmann S.A."/>
            <person name="Ueda H.R."/>
            <person name="van Nimwegen E."/>
            <person name="Verardo R."/>
            <person name="Wei C.L."/>
            <person name="Yagi K."/>
            <person name="Yamanishi H."/>
            <person name="Zabarovsky E."/>
            <person name="Zhu S."/>
            <person name="Zimmer A."/>
            <person name="Hide W."/>
            <person name="Bult C."/>
            <person name="Grimmond S.M."/>
            <person name="Teasdale R.D."/>
            <person name="Liu E.T."/>
            <person name="Brusic V."/>
            <person name="Quackenbush J."/>
            <person name="Wahlestedt C."/>
            <person name="Mattick J.S."/>
            <person name="Hume D.A."/>
            <person name="Kai C."/>
            <person name="Sasaki D."/>
            <person name="Tomaru Y."/>
            <person name="Fukuda S."/>
            <person name="Kanamori-Katayama M."/>
            <person name="Suzuki M."/>
            <person name="Aoki J."/>
            <person name="Arakawa T."/>
            <person name="Iida J."/>
            <person name="Imamura K."/>
            <person name="Itoh M."/>
            <person name="Kato T."/>
            <person name="Kawaji H."/>
            <person name="Kawagashira N."/>
            <person name="Kawashima T."/>
            <person name="Kojima M."/>
            <person name="Kondo S."/>
            <person name="Konno H."/>
            <person name="Nakano K."/>
            <person name="Ninomiya N."/>
            <person name="Nishio T."/>
            <person name="Okada M."/>
            <person name="Plessy C."/>
            <person name="Shibata K."/>
            <person name="Shiraki T."/>
            <person name="Suzuki S."/>
            <person name="Tagami M."/>
            <person name="Waki K."/>
            <person name="Watahiki A."/>
            <person name="Okamura-Oho Y."/>
            <person name="Suzuki H."/>
            <person name="Kawai J."/>
            <person name="Hayashizaki Y."/>
        </authorList>
    </citation>
    <scope>NUCLEOTIDE SEQUENCE [LARGE SCALE MRNA]</scope>
    <source>
        <strain>C57BL/6J</strain>
        <strain>NOD</strain>
        <tissue>Dendritic cell</tissue>
        <tissue>Testis</tissue>
    </source>
</reference>
<reference key="2">
    <citation type="submission" date="2005-09" db="EMBL/GenBank/DDBJ databases">
        <authorList>
            <person name="Mural R.J."/>
            <person name="Adams M.D."/>
            <person name="Myers E.W."/>
            <person name="Smith H.O."/>
            <person name="Venter J.C."/>
        </authorList>
    </citation>
    <scope>NUCLEOTIDE SEQUENCE [LARGE SCALE GENOMIC DNA]</scope>
</reference>
<reference key="3">
    <citation type="journal article" date="2004" name="Genome Res.">
        <title>The status, quality, and expansion of the NIH full-length cDNA project: the Mammalian Gene Collection (MGC).</title>
        <authorList>
            <consortium name="The MGC Project Team"/>
        </authorList>
    </citation>
    <scope>NUCLEOTIDE SEQUENCE [LARGE SCALE MRNA]</scope>
    <source>
        <tissue>Brain</tissue>
    </source>
</reference>
<reference key="4">
    <citation type="journal article" date="2011" name="J. Biol. Chem.">
        <title>DENN domain proteins: regulators of Rab GTPases.</title>
        <authorList>
            <person name="Marat A.L."/>
            <person name="Dokainish H."/>
            <person name="McPherson P.S."/>
        </authorList>
    </citation>
    <scope>IDENTIFICATION</scope>
</reference>
<gene>
    <name type="primary">Dennd6b</name>
</gene>
<name>DEN6B_MOUSE</name>
<sequence>MEVPVGPGPRQAGGGLGATRSSSSGRAARTAEMPWARFSAWLECVCVVTFDLELGQALELVYPSDFRLTDKEKSSICYLAFPDSHSGCLGDTQFSFRMRQCGGQRSLWQVDDRSYNNKAPLALQREPAHYLGYVYFRQVKDSSVKRGYFQKSLVLVSRLPFVRLFQSLLSLIAPEYFEKLAPCLEAVCNEIDQWPAPVPGQTLNLPIMGVVIQVRIPSRVDKLESSPPKQCDQENLLPAPVVLTSVHELDLFRCFRPVLTHVQTLWELMLLGEPLVVLAPSPDVSSELVLALTSCLQPLKFCCDFRPYFTIHDSEFKELTTRTQAPPNVVLGVTNPFFIKTLQHWPHVLRIGEPKMSGDLPKQVKLKKPSRLKTLDTKPGLYTSYTAHLHRDKALLKRLLKGVQKKRPWDVQSALLRRHLLELTQSFIIPLEHYMASLMPLQKNITPWKSPPQICPFRQDDFLRSLEHAGPQLTCILKGDWLGLYRRFFKSPHFDGWYRQRHKEMAQKLEALHLEAICEANIEAWMKDKSEVEVVDLVLKLREKLVRAQGHQLPVKEVTLQRAQLYIDTVIGSLPKDLQAVLCPP</sequence>